<gene>
    <name evidence="22" type="primary">Slc38a3</name>
    <name type="synonym">Sn1</name>
    <name type="synonym">Snat3</name>
</gene>
<feature type="chain" id="PRO_0000093829" description="Sodium-coupled neutral amino acid transporter 3">
    <location>
        <begin position="1"/>
        <end position="505"/>
    </location>
</feature>
<feature type="transmembrane region" description="Helical" evidence="3">
    <location>
        <begin position="82"/>
        <end position="102"/>
    </location>
</feature>
<feature type="transmembrane region" description="Helical" evidence="3">
    <location>
        <begin position="105"/>
        <end position="125"/>
    </location>
</feature>
<feature type="transmembrane region" description="Helical" evidence="3">
    <location>
        <begin position="143"/>
        <end position="163"/>
    </location>
</feature>
<feature type="transmembrane region" description="Helical" evidence="3">
    <location>
        <begin position="186"/>
        <end position="206"/>
    </location>
</feature>
<feature type="transmembrane region" description="Helical" evidence="3">
    <location>
        <begin position="212"/>
        <end position="232"/>
    </location>
</feature>
<feature type="transmembrane region" description="Helical" evidence="3">
    <location>
        <begin position="288"/>
        <end position="308"/>
    </location>
</feature>
<feature type="transmembrane region" description="Helical" evidence="3">
    <location>
        <begin position="325"/>
        <end position="345"/>
    </location>
</feature>
<feature type="transmembrane region" description="Helical" evidence="3">
    <location>
        <begin position="367"/>
        <end position="387"/>
    </location>
</feature>
<feature type="transmembrane region" description="Helical" evidence="3">
    <location>
        <begin position="409"/>
        <end position="429"/>
    </location>
</feature>
<feature type="transmembrane region" description="Helical" evidence="3">
    <location>
        <begin position="432"/>
        <end position="452"/>
    </location>
</feature>
<feature type="transmembrane region" description="Helical" evidence="3">
    <location>
        <begin position="472"/>
        <end position="492"/>
    </location>
</feature>
<feature type="region of interest" description="Disordered" evidence="5">
    <location>
        <begin position="27"/>
        <end position="48"/>
    </location>
</feature>
<feature type="compositionally biased region" description="Basic and acidic residues" evidence="5">
    <location>
        <begin position="33"/>
        <end position="43"/>
    </location>
</feature>
<feature type="site" description="Modulates L-glutamine-induced conductances and Na(+) binding" evidence="2">
    <location>
        <position position="76"/>
    </location>
</feature>
<feature type="glycosylation site" description="N-linked (GlcNAc...) asparagine" evidence="3">
    <location>
        <position position="73"/>
    </location>
</feature>
<feature type="glycosylation site" description="N-linked (GlcNAc...) asparagine" evidence="3">
    <location>
        <position position="247"/>
    </location>
</feature>
<feature type="glycosylation site" description="N-linked (GlcNAc...) asparagine" evidence="3">
    <location>
        <position position="251"/>
    </location>
</feature>
<feature type="glycosylation site" description="N-linked (GlcNAc...) asparagine" evidence="3">
    <location>
        <position position="324"/>
    </location>
</feature>
<feature type="disulfide bond" evidence="4">
    <location>
        <begin position="239"/>
        <end position="276"/>
    </location>
</feature>
<feature type="mutagenesis site" description="Homozygous mice are lethal. Mice die between 18 and 20 days after birth. Mice are small, lethargic and ataxic." evidence="13">
    <location>
        <begin position="264"/>
        <end position="505"/>
    </location>
</feature>
<feature type="sequence conflict" description="In Ref. 2; BAC28963." evidence="18" ref="2">
    <original>S</original>
    <variation>N</variation>
    <location>
        <position position="110"/>
    </location>
</feature>
<feature type="sequence conflict" description="In Ref. 2; BAC28963." evidence="18" ref="2">
    <original>Q</original>
    <variation>R</variation>
    <location>
        <position position="130"/>
    </location>
</feature>
<feature type="sequence conflict" description="In Ref. 1; AAF61849." evidence="18" ref="1">
    <original>T</original>
    <variation>A</variation>
    <location>
        <position position="270"/>
    </location>
</feature>
<evidence type="ECO:0000250" key="1">
    <source>
        <dbReference type="UniProtKB" id="Q99624"/>
    </source>
</evidence>
<evidence type="ECO:0000250" key="2">
    <source>
        <dbReference type="UniProtKB" id="Q9JHZ9"/>
    </source>
</evidence>
<evidence type="ECO:0000255" key="3"/>
<evidence type="ECO:0000255" key="4">
    <source>
        <dbReference type="PROSITE-ProRule" id="PRU00114"/>
    </source>
</evidence>
<evidence type="ECO:0000256" key="5">
    <source>
        <dbReference type="SAM" id="MobiDB-lite"/>
    </source>
</evidence>
<evidence type="ECO:0000269" key="6">
    <source>
    </source>
</evidence>
<evidence type="ECO:0000269" key="7">
    <source>
    </source>
</evidence>
<evidence type="ECO:0000269" key="8">
    <source>
    </source>
</evidence>
<evidence type="ECO:0000269" key="9">
    <source>
    </source>
</evidence>
<evidence type="ECO:0000269" key="10">
    <source>
    </source>
</evidence>
<evidence type="ECO:0000269" key="11">
    <source>
    </source>
</evidence>
<evidence type="ECO:0000269" key="12">
    <source>
    </source>
</evidence>
<evidence type="ECO:0000269" key="13">
    <source>
    </source>
</evidence>
<evidence type="ECO:0000269" key="14">
    <source>
    </source>
</evidence>
<evidence type="ECO:0000269" key="15">
    <source>
    </source>
</evidence>
<evidence type="ECO:0000269" key="16">
    <source>
    </source>
</evidence>
<evidence type="ECO:0000303" key="17">
    <source>
    </source>
</evidence>
<evidence type="ECO:0000305" key="18"/>
<evidence type="ECO:0000312" key="19">
    <source>
        <dbReference type="EMBL" id="AAF61849.1"/>
    </source>
</evidence>
<evidence type="ECO:0000312" key="20">
    <source>
        <dbReference type="EMBL" id="AAH54846.1"/>
    </source>
</evidence>
<evidence type="ECO:0000312" key="21">
    <source>
        <dbReference type="EMBL" id="AAH55339.1"/>
    </source>
</evidence>
<evidence type="ECO:0000312" key="22">
    <source>
        <dbReference type="MGI" id="MGI:1923507"/>
    </source>
</evidence>
<organism>
    <name type="scientific">Mus musculus</name>
    <name type="common">Mouse</name>
    <dbReference type="NCBI Taxonomy" id="10090"/>
    <lineage>
        <taxon>Eukaryota</taxon>
        <taxon>Metazoa</taxon>
        <taxon>Chordata</taxon>
        <taxon>Craniata</taxon>
        <taxon>Vertebrata</taxon>
        <taxon>Euteleostomi</taxon>
        <taxon>Mammalia</taxon>
        <taxon>Eutheria</taxon>
        <taxon>Euarchontoglires</taxon>
        <taxon>Glires</taxon>
        <taxon>Rodentia</taxon>
        <taxon>Myomorpha</taxon>
        <taxon>Muroidea</taxon>
        <taxon>Muridae</taxon>
        <taxon>Murinae</taxon>
        <taxon>Mus</taxon>
        <taxon>Mus</taxon>
    </lineage>
</organism>
<accession>Q9DCP2</accession>
<accession>Q8BS53</accession>
<accession>Q9JLL8</accession>
<protein>
    <recommendedName>
        <fullName evidence="18">Sodium-coupled neutral amino acid transporter 3</fullName>
    </recommendedName>
    <alternativeName>
        <fullName>N-system amino acid transporter 1</fullName>
    </alternativeName>
    <alternativeName>
        <fullName>Na(+)-coupled neutral amino acid transporter 3</fullName>
    </alternativeName>
    <alternativeName>
        <fullName>Solute carrier family 38 member 3</fullName>
        <shortName evidence="17">mNAT</shortName>
    </alternativeName>
    <alternativeName>
        <fullName>System N amino acid transporter 1</fullName>
    </alternativeName>
</protein>
<dbReference type="EMBL" id="AF159856">
    <property type="protein sequence ID" value="AAF61849.1"/>
    <property type="molecule type" value="mRNA"/>
</dbReference>
<dbReference type="EMBL" id="AK002607">
    <property type="protein sequence ID" value="BAB22226.1"/>
    <property type="molecule type" value="mRNA"/>
</dbReference>
<dbReference type="EMBL" id="AK035155">
    <property type="protein sequence ID" value="BAC28963.1"/>
    <property type="molecule type" value="mRNA"/>
</dbReference>
<dbReference type="EMBL" id="BC054846">
    <property type="protein sequence ID" value="AAH54846.1"/>
    <property type="molecule type" value="mRNA"/>
</dbReference>
<dbReference type="EMBL" id="BC055339">
    <property type="protein sequence ID" value="AAH55339.1"/>
    <property type="molecule type" value="mRNA"/>
</dbReference>
<dbReference type="CCDS" id="CCDS23503.1"/>
<dbReference type="RefSeq" id="NP_001186146.1">
    <property type="nucleotide sequence ID" value="NM_001199217.1"/>
</dbReference>
<dbReference type="RefSeq" id="NP_001186147.1">
    <property type="nucleotide sequence ID" value="NM_001199218.1"/>
</dbReference>
<dbReference type="RefSeq" id="NP_076294.2">
    <property type="nucleotide sequence ID" value="NM_023805.3"/>
</dbReference>
<dbReference type="RefSeq" id="XP_017169171.1">
    <property type="nucleotide sequence ID" value="XM_017313682.1"/>
</dbReference>
<dbReference type="RefSeq" id="XP_030100556.1">
    <property type="nucleotide sequence ID" value="XM_030244696.2"/>
</dbReference>
<dbReference type="RefSeq" id="XP_030100557.1">
    <property type="nucleotide sequence ID" value="XM_030244697.1"/>
</dbReference>
<dbReference type="RefSeq" id="XP_036011271.1">
    <property type="nucleotide sequence ID" value="XM_036155378.1"/>
</dbReference>
<dbReference type="SMR" id="Q9DCP2"/>
<dbReference type="BioGRID" id="218051">
    <property type="interactions" value="2"/>
</dbReference>
<dbReference type="FunCoup" id="Q9DCP2">
    <property type="interactions" value="158"/>
</dbReference>
<dbReference type="STRING" id="10090.ENSMUSP00000130414"/>
<dbReference type="TCDB" id="2.A.18.6.2">
    <property type="family name" value="the amino acid/auxin permease (aaap) family"/>
</dbReference>
<dbReference type="GlyCosmos" id="Q9DCP2">
    <property type="glycosylation" value="4 sites, No reported glycans"/>
</dbReference>
<dbReference type="GlyGen" id="Q9DCP2">
    <property type="glycosylation" value="6 sites, 1 N-linked glycan (1 site), 1 O-linked glycan (2 sites)"/>
</dbReference>
<dbReference type="iPTMnet" id="Q9DCP2"/>
<dbReference type="PhosphoSitePlus" id="Q9DCP2"/>
<dbReference type="SwissPalm" id="Q9DCP2"/>
<dbReference type="jPOST" id="Q9DCP2"/>
<dbReference type="PaxDb" id="10090-ENSMUSP00000130414"/>
<dbReference type="PeptideAtlas" id="Q9DCP2"/>
<dbReference type="ProteomicsDB" id="260777"/>
<dbReference type="Antibodypedia" id="73268">
    <property type="antibodies" value="94 antibodies from 24 providers"/>
</dbReference>
<dbReference type="DNASU" id="76257"/>
<dbReference type="Ensembl" id="ENSMUST00000010208.14">
    <property type="protein sequence ID" value="ENSMUSP00000010208.9"/>
    <property type="gene ID" value="ENSMUSG00000010064.16"/>
</dbReference>
<dbReference type="Ensembl" id="ENSMUST00000167868.8">
    <property type="protein sequence ID" value="ENSMUSP00000130414.2"/>
    <property type="gene ID" value="ENSMUSG00000010064.16"/>
</dbReference>
<dbReference type="Ensembl" id="ENSMUST00000177567.8">
    <property type="protein sequence ID" value="ENSMUSP00000137561.2"/>
    <property type="gene ID" value="ENSMUSG00000010064.16"/>
</dbReference>
<dbReference type="Ensembl" id="ENSMUST00000193932.6">
    <property type="protein sequence ID" value="ENSMUSP00000142087.2"/>
    <property type="gene ID" value="ENSMUSG00000010064.16"/>
</dbReference>
<dbReference type="GeneID" id="76257"/>
<dbReference type="KEGG" id="mmu:76257"/>
<dbReference type="UCSC" id="uc009rmn.1">
    <property type="organism name" value="mouse"/>
</dbReference>
<dbReference type="AGR" id="MGI:1923507"/>
<dbReference type="CTD" id="10991"/>
<dbReference type="MGI" id="MGI:1923507">
    <property type="gene designation" value="Slc38a3"/>
</dbReference>
<dbReference type="VEuPathDB" id="HostDB:ENSMUSG00000010064"/>
<dbReference type="eggNOG" id="KOG1305">
    <property type="taxonomic scope" value="Eukaryota"/>
</dbReference>
<dbReference type="GeneTree" id="ENSGT00940000157127"/>
<dbReference type="HOGENOM" id="CLU_009020_0_2_1"/>
<dbReference type="InParanoid" id="Q9DCP2"/>
<dbReference type="OMA" id="MEVAGEM"/>
<dbReference type="OrthoDB" id="655540at2759"/>
<dbReference type="PhylomeDB" id="Q9DCP2"/>
<dbReference type="TreeFam" id="TF328787"/>
<dbReference type="Reactome" id="R-MMU-352230">
    <property type="pathway name" value="Amino acid transport across the plasma membrane"/>
</dbReference>
<dbReference type="BioGRID-ORCS" id="76257">
    <property type="hits" value="0 hits in 77 CRISPR screens"/>
</dbReference>
<dbReference type="ChiTaRS" id="Slc38a3">
    <property type="organism name" value="mouse"/>
</dbReference>
<dbReference type="PRO" id="PR:Q9DCP2"/>
<dbReference type="Proteomes" id="UP000000589">
    <property type="component" value="Chromosome 9"/>
</dbReference>
<dbReference type="RNAct" id="Q9DCP2">
    <property type="molecule type" value="protein"/>
</dbReference>
<dbReference type="Bgee" id="ENSMUSG00000010064">
    <property type="expression patterns" value="Expressed in retinal neural layer and 157 other cell types or tissues"/>
</dbReference>
<dbReference type="ExpressionAtlas" id="Q9DCP2">
    <property type="expression patterns" value="baseline and differential"/>
</dbReference>
<dbReference type="GO" id="GO:0016324">
    <property type="term" value="C:apical plasma membrane"/>
    <property type="evidence" value="ECO:0000314"/>
    <property type="project" value="ARUK-UCL"/>
</dbReference>
<dbReference type="GO" id="GO:0016323">
    <property type="term" value="C:basolateral plasma membrane"/>
    <property type="evidence" value="ECO:0007669"/>
    <property type="project" value="UniProtKB-SubCell"/>
</dbReference>
<dbReference type="GO" id="GO:0016020">
    <property type="term" value="C:membrane"/>
    <property type="evidence" value="ECO:0000314"/>
    <property type="project" value="MGI"/>
</dbReference>
<dbReference type="GO" id="GO:0005886">
    <property type="term" value="C:plasma membrane"/>
    <property type="evidence" value="ECO:0000314"/>
    <property type="project" value="MGI"/>
</dbReference>
<dbReference type="GO" id="GO:0015180">
    <property type="term" value="F:L-alanine transmembrane transporter activity"/>
    <property type="evidence" value="ECO:0007669"/>
    <property type="project" value="Ensembl"/>
</dbReference>
<dbReference type="GO" id="GO:0140831">
    <property type="term" value="F:L-asparagine, sodium:proton antiporter activity"/>
    <property type="evidence" value="ECO:0000314"/>
    <property type="project" value="UniProtKB"/>
</dbReference>
<dbReference type="GO" id="GO:0015186">
    <property type="term" value="F:L-glutamine transmembrane transporter activity"/>
    <property type="evidence" value="ECO:0000314"/>
    <property type="project" value="MGI"/>
</dbReference>
<dbReference type="GO" id="GO:0140830">
    <property type="term" value="F:L-glutamine, sodium:proton antiporter activity"/>
    <property type="evidence" value="ECO:0000314"/>
    <property type="project" value="UniProtKB"/>
</dbReference>
<dbReference type="GO" id="GO:0005290">
    <property type="term" value="F:L-histidine transmembrane transporter activity"/>
    <property type="evidence" value="ECO:0000314"/>
    <property type="project" value="MGI"/>
</dbReference>
<dbReference type="GO" id="GO:0140832">
    <property type="term" value="F:L-histidine, sodium:proton antiporter activity"/>
    <property type="evidence" value="ECO:0000314"/>
    <property type="project" value="UniProtKB"/>
</dbReference>
<dbReference type="GO" id="GO:0005295">
    <property type="term" value="F:neutral L-amino acid:sodium symporter activity"/>
    <property type="evidence" value="ECO:0000250"/>
    <property type="project" value="UniProtKB"/>
</dbReference>
<dbReference type="GO" id="GO:0006867">
    <property type="term" value="P:asparagine transport"/>
    <property type="evidence" value="ECO:0000250"/>
    <property type="project" value="UniProtKB"/>
</dbReference>
<dbReference type="GO" id="GO:0051365">
    <property type="term" value="P:cellular response to potassium ion starvation"/>
    <property type="evidence" value="ECO:0000314"/>
    <property type="project" value="MGI"/>
</dbReference>
<dbReference type="GO" id="GO:0007565">
    <property type="term" value="P:female pregnancy"/>
    <property type="evidence" value="ECO:0007669"/>
    <property type="project" value="Ensembl"/>
</dbReference>
<dbReference type="GO" id="GO:0010585">
    <property type="term" value="P:glutamine secretion"/>
    <property type="evidence" value="ECO:0000314"/>
    <property type="project" value="UniProtKB"/>
</dbReference>
<dbReference type="GO" id="GO:0006868">
    <property type="term" value="P:glutamine transport"/>
    <property type="evidence" value="ECO:0000314"/>
    <property type="project" value="MGI"/>
</dbReference>
<dbReference type="GO" id="GO:0015817">
    <property type="term" value="P:histidine transport"/>
    <property type="evidence" value="ECO:0000314"/>
    <property type="project" value="MGI"/>
</dbReference>
<dbReference type="GO" id="GO:0080144">
    <property type="term" value="P:intracellular amino acid homeostasis"/>
    <property type="evidence" value="ECO:0000315"/>
    <property type="project" value="UniProtKB"/>
</dbReference>
<dbReference type="GO" id="GO:1903811">
    <property type="term" value="P:L-asparagine import across plasma membrane"/>
    <property type="evidence" value="ECO:0000250"/>
    <property type="project" value="UniProtKB"/>
</dbReference>
<dbReference type="GO" id="GO:1903803">
    <property type="term" value="P:L-glutamine import across plasma membrane"/>
    <property type="evidence" value="ECO:0000314"/>
    <property type="project" value="UniProtKB"/>
</dbReference>
<dbReference type="GO" id="GO:1903810">
    <property type="term" value="P:L-histidine import across plasma membrane"/>
    <property type="evidence" value="ECO:0000314"/>
    <property type="project" value="UniProtKB"/>
</dbReference>
<dbReference type="GO" id="GO:1902024">
    <property type="term" value="P:L-histidine transport"/>
    <property type="evidence" value="ECO:0000250"/>
    <property type="project" value="UniProtKB"/>
</dbReference>
<dbReference type="GO" id="GO:2000487">
    <property type="term" value="P:positive regulation of glutamine transport"/>
    <property type="evidence" value="ECO:0007669"/>
    <property type="project" value="Ensembl"/>
</dbReference>
<dbReference type="GO" id="GO:0045944">
    <property type="term" value="P:positive regulation of transcription by RNA polymerase II"/>
    <property type="evidence" value="ECO:0000314"/>
    <property type="project" value="MGI"/>
</dbReference>
<dbReference type="InterPro" id="IPR013057">
    <property type="entry name" value="AA_transpt_TM"/>
</dbReference>
<dbReference type="PANTHER" id="PTHR22950">
    <property type="entry name" value="AMINO ACID TRANSPORTER"/>
    <property type="match status" value="1"/>
</dbReference>
<dbReference type="PANTHER" id="PTHR22950:SF22">
    <property type="entry name" value="SODIUM-COUPLED NEUTRAL AMINO ACID TRANSPORTER 3"/>
    <property type="match status" value="1"/>
</dbReference>
<dbReference type="Pfam" id="PF01490">
    <property type="entry name" value="Aa_trans"/>
    <property type="match status" value="1"/>
</dbReference>
<name>S38A3_MOUSE</name>
<keyword id="KW-0029">Amino-acid transport</keyword>
<keyword id="KW-0050">Antiport</keyword>
<keyword id="KW-1003">Cell membrane</keyword>
<keyword id="KW-1015">Disulfide bond</keyword>
<keyword id="KW-0325">Glycoprotein</keyword>
<keyword id="KW-0406">Ion transport</keyword>
<keyword id="KW-0472">Membrane</keyword>
<keyword id="KW-1185">Reference proteome</keyword>
<keyword id="KW-0915">Sodium</keyword>
<keyword id="KW-0739">Sodium transport</keyword>
<keyword id="KW-0769">Symport</keyword>
<keyword id="KW-0812">Transmembrane</keyword>
<keyword id="KW-1133">Transmembrane helix</keyword>
<keyword id="KW-0813">Transport</keyword>
<comment type="function">
    <text evidence="2 6 7 8 9 13 14 15">Symporter that cotransports specific neutral amino acids and sodium ions, coupled to an H(+) antiporter activity (PubMed:10716701, PubMed:15899884, PubMed:16249471, PubMed:18689705, PubMed:29561757, PubMed:30017230). Mainly participates in the glutamate-GABA-glutamine cycle in brain where it transports L-glutamine from astrocytes in the intercellular space for the replenishment of both neurotransmitters glutamate and gamma-aminobutyric acid (GABA) in neurons and also functions as the major influx transporter in ganglion cells mediating the uptake of glutamine (PubMed:18689705, PubMed:29561757, PubMed:30017230). The transport activity is specific for L-glutamine, L-histidine and L-asparagine (PubMed:10716701, PubMed:15899884, PubMed:16249471, PubMed:18689705, PubMed:29561757, PubMed:30017230). The transport is electroneutral coupled to the cotransport of 1 Na(+) and the antiport of 1 H(+) (By similarity). The transport is pH dependent, saturable, Li(+) tolerant and functions in both direction depending on the concentration gradients of its substrates and cotransported ions (PubMed:10716701, PubMed:16249471, PubMed:18689705). Also mediates an amino acid-gated H(+) conductance that is not stoichiometrically coupled to the amino acid transport but which influences the ionic gradients that drive the amino acid transport (By similarity). In addition, may play a role in nitrogen metabolism, amino acid homeostasis, glucose metabolism and renal ammoniagenesis (PubMed:26490457).</text>
</comment>
<comment type="catalytic activity">
    <reaction evidence="7 9 14">
        <text>L-histidine(out) + Na(+)(out) + H(+)(in) = L-histidine(in) + Na(+)(in) + H(+)(out)</text>
        <dbReference type="Rhea" id="RHEA:71135"/>
        <dbReference type="ChEBI" id="CHEBI:15378"/>
        <dbReference type="ChEBI" id="CHEBI:29101"/>
        <dbReference type="ChEBI" id="CHEBI:57595"/>
    </reaction>
    <physiologicalReaction direction="left-to-right" evidence="7 9 14">
        <dbReference type="Rhea" id="RHEA:71136"/>
    </physiologicalReaction>
    <physiologicalReaction direction="right-to-left" evidence="2">
        <dbReference type="Rhea" id="RHEA:71137"/>
    </physiologicalReaction>
</comment>
<comment type="catalytic activity">
    <reaction evidence="8 15">
        <text>L-glutamine(out) + Na(+)(out) + H(+)(in) = L-glutamine(in) + Na(+)(in) + H(+)(out)</text>
        <dbReference type="Rhea" id="RHEA:71127"/>
        <dbReference type="ChEBI" id="CHEBI:15378"/>
        <dbReference type="ChEBI" id="CHEBI:29101"/>
        <dbReference type="ChEBI" id="CHEBI:58359"/>
    </reaction>
    <physiologicalReaction direction="left-to-right" evidence="8">
        <dbReference type="Rhea" id="RHEA:71128"/>
    </physiologicalReaction>
    <physiologicalReaction direction="right-to-left" evidence="15">
        <dbReference type="Rhea" id="RHEA:71129"/>
    </physiologicalReaction>
</comment>
<comment type="catalytic activity">
    <reaction evidence="8">
        <text>L-asparagine(out) + Na(+)(out) + H(+)(in) = L-asparagine(in) + Na(+)(in) + H(+)(out)</text>
        <dbReference type="Rhea" id="RHEA:71131"/>
        <dbReference type="ChEBI" id="CHEBI:15378"/>
        <dbReference type="ChEBI" id="CHEBI:29101"/>
        <dbReference type="ChEBI" id="CHEBI:58048"/>
    </reaction>
    <physiologicalReaction direction="left-to-right" evidence="8">
        <dbReference type="Rhea" id="RHEA:71132"/>
    </physiologicalReaction>
    <physiologicalReaction direction="right-to-left" evidence="2">
        <dbReference type="Rhea" id="RHEA:71133"/>
    </physiologicalReaction>
</comment>
<comment type="biophysicochemical properties">
    <kinetics>
        <KM evidence="6">1.1 mM for L-histidine (in Na(+)-buffer at pH 7.5)</KM>
        <KM evidence="6">1.55 mM for L-glutamine (in Na(+)-buffer at pH 7.5)</KM>
        <KM evidence="6">0.41 mM for L-glutamine</KM>
    </kinetics>
</comment>
<comment type="subcellular location">
    <subcellularLocation>
        <location evidence="9 15 16">Cell membrane</location>
        <topology evidence="3">Multi-pass membrane protein</topology>
    </subcellularLocation>
    <subcellularLocation>
        <location evidence="6">Basolateral cell membrane</location>
    </subcellularLocation>
    <text evidence="2 6 11 15 16">The localization appears to be basolateral in the plasma membrane of hepatocytes surrounding the central vein (PubMed:10716701). Localized at the cerebrospinal fluid (CSF)-facing membrane of the choroid plexus epithelial cells (PubMed:32046769). In astrocytes, the localization at cell membrane is decreased by ammonia through the PKC signaling (PubMed:30017230). Expressed in both luminal and abluminal plasma membranes of larger microvessels and blood brain barrier (BBB) capillaries (PubMed:21364602). Restricted to the basolateral membranes of S3 segment cells of the proximal tubules (By similarity).</text>
</comment>
<comment type="tissue specificity">
    <text evidence="6 9">Expressed predominantly in liver, moderately expressed in kidney and brain, and barely detectable in heart and muscle (PubMed:10716701). Within liver, expressed in hepatocytes (PubMed:10716701). Not detected in testis (PubMed:10716701). Expressed in cells of the ganglion cell layer, in soma of some cells of the inner nuclear layer (at protein level) (PubMed:18689705). Expressed in the inner segments of photoreceptor cells (PubMed:18689705).</text>
</comment>
<comment type="induction">
    <text evidence="7 10 12">Up-regulated during renal ammoniagenesis and urinary ammonium excretion (PubMed:19458124). Up-regulated during acute acidosis (PubMed:24854847). Down-regulated by chronic treatment by insulin in hepatocytes (PubMed:15899884). Up-regulated by acute treatment by insulin (PubMed:15899884).</text>
</comment>
<comment type="similarity">
    <text evidence="18">Belongs to the amino acid/polyamine transporter 2 family.</text>
</comment>
<comment type="caution">
    <text evidence="1 2">Fei et al (PMID:10823827) shows that the transport process is electrogenic with a Na(+):L-glutamine stoichiometry of 2:1, contrary to the conclusions of Chaudhry et al (PMID:10619430) who finds that the transport is electroneutral with a Na(+):L-glutamine stoichiometry of 1:1 (By similarity). Chaudhry et al (PMID:11742981) shows that this electrogenic transport describes by Fei et al (PMID:10823827) would correspond to an amino acid-gated H(+) conductance that is not stoichiometrically coupled to the amino acid transport but which influences the ionic gradients that drive the amino acid transport (By similarity).</text>
</comment>
<sequence>MEIPRQTEMVELVPNGKHLEGLLPVGVPTTDTQRTEDTQHCGEGKGFLQKSPSKEPHFTDFEGKTSFGMSVFNLSNAIMGSGILGLAYAMANTGIILFLFLLTAVALLSSYSIHLLLKSSGIVGIRAYEQLGYRAFGTPGKLAAALAITLQNIGAMSSYLYIIKSELPLVIQTFLNLEKPASVWYMDGNYLVILVSVTIILPLALMRQLGYLGYSSGFSLSCMVFFLIAVIYKKFQVPCPLAHNLANATGNFSHMVVAEEKAQLQGEPDTAAEAFCTPSYFTLNSQTAYTIPIMAFAFVCHPEVLPIYTELKDPSKRKMQHISNLSIAVMYVMYFLAALFGYLTFYDGVESELLHTYSKVDPFDVLILCVRVAVLIAVTLTVPIVLFPVRRAIQQMLFQNQEFSWLRHVLIATGLLTCINLLVIFAPNILGIFGIIGATSAPCLIFIFPAIFYFRIMPTDKEPARSTPKILALCFAAVGFLLMTMSLSFIIIDWVSGTSQHGGNH</sequence>
<proteinExistence type="evidence at protein level"/>
<reference evidence="18 19" key="1">
    <citation type="journal article" date="2000" name="Proc. Natl. Acad. Sci. U.S.A.">
        <title>Identification and characterization of an amino acid transporter expressed differentially in liver.</title>
        <authorList>
            <person name="Gu S."/>
            <person name="Roderick H.L."/>
            <person name="Camacho P."/>
            <person name="Jiang J.X."/>
        </authorList>
    </citation>
    <scope>NUCLEOTIDE SEQUENCE [MRNA]</scope>
    <scope>FUNCTION</scope>
    <scope>BIOPHYSICOCHEMICAL PROPERTIES</scope>
    <scope>SUBCELLULAR LOCATION</scope>
    <scope>TISSUE SPECIFICITY</scope>
    <source>
        <tissue evidence="6">Brain</tissue>
        <tissue evidence="6">Kidney</tissue>
        <tissue evidence="19">Liver</tissue>
    </source>
</reference>
<reference key="2">
    <citation type="journal article" date="2005" name="Science">
        <title>The transcriptional landscape of the mammalian genome.</title>
        <authorList>
            <person name="Carninci P."/>
            <person name="Kasukawa T."/>
            <person name="Katayama S."/>
            <person name="Gough J."/>
            <person name="Frith M.C."/>
            <person name="Maeda N."/>
            <person name="Oyama R."/>
            <person name="Ravasi T."/>
            <person name="Lenhard B."/>
            <person name="Wells C."/>
            <person name="Kodzius R."/>
            <person name="Shimokawa K."/>
            <person name="Bajic V.B."/>
            <person name="Brenner S.E."/>
            <person name="Batalov S."/>
            <person name="Forrest A.R."/>
            <person name="Zavolan M."/>
            <person name="Davis M.J."/>
            <person name="Wilming L.G."/>
            <person name="Aidinis V."/>
            <person name="Allen J.E."/>
            <person name="Ambesi-Impiombato A."/>
            <person name="Apweiler R."/>
            <person name="Aturaliya R.N."/>
            <person name="Bailey T.L."/>
            <person name="Bansal M."/>
            <person name="Baxter L."/>
            <person name="Beisel K.W."/>
            <person name="Bersano T."/>
            <person name="Bono H."/>
            <person name="Chalk A.M."/>
            <person name="Chiu K.P."/>
            <person name="Choudhary V."/>
            <person name="Christoffels A."/>
            <person name="Clutterbuck D.R."/>
            <person name="Crowe M.L."/>
            <person name="Dalla E."/>
            <person name="Dalrymple B.P."/>
            <person name="de Bono B."/>
            <person name="Della Gatta G."/>
            <person name="di Bernardo D."/>
            <person name="Down T."/>
            <person name="Engstrom P."/>
            <person name="Fagiolini M."/>
            <person name="Faulkner G."/>
            <person name="Fletcher C.F."/>
            <person name="Fukushima T."/>
            <person name="Furuno M."/>
            <person name="Futaki S."/>
            <person name="Gariboldi M."/>
            <person name="Georgii-Hemming P."/>
            <person name="Gingeras T.R."/>
            <person name="Gojobori T."/>
            <person name="Green R.E."/>
            <person name="Gustincich S."/>
            <person name="Harbers M."/>
            <person name="Hayashi Y."/>
            <person name="Hensch T.K."/>
            <person name="Hirokawa N."/>
            <person name="Hill D."/>
            <person name="Huminiecki L."/>
            <person name="Iacono M."/>
            <person name="Ikeo K."/>
            <person name="Iwama A."/>
            <person name="Ishikawa T."/>
            <person name="Jakt M."/>
            <person name="Kanapin A."/>
            <person name="Katoh M."/>
            <person name="Kawasawa Y."/>
            <person name="Kelso J."/>
            <person name="Kitamura H."/>
            <person name="Kitano H."/>
            <person name="Kollias G."/>
            <person name="Krishnan S.P."/>
            <person name="Kruger A."/>
            <person name="Kummerfeld S.K."/>
            <person name="Kurochkin I.V."/>
            <person name="Lareau L.F."/>
            <person name="Lazarevic D."/>
            <person name="Lipovich L."/>
            <person name="Liu J."/>
            <person name="Liuni S."/>
            <person name="McWilliam S."/>
            <person name="Madan Babu M."/>
            <person name="Madera M."/>
            <person name="Marchionni L."/>
            <person name="Matsuda H."/>
            <person name="Matsuzawa S."/>
            <person name="Miki H."/>
            <person name="Mignone F."/>
            <person name="Miyake S."/>
            <person name="Morris K."/>
            <person name="Mottagui-Tabar S."/>
            <person name="Mulder N."/>
            <person name="Nakano N."/>
            <person name="Nakauchi H."/>
            <person name="Ng P."/>
            <person name="Nilsson R."/>
            <person name="Nishiguchi S."/>
            <person name="Nishikawa S."/>
            <person name="Nori F."/>
            <person name="Ohara O."/>
            <person name="Okazaki Y."/>
            <person name="Orlando V."/>
            <person name="Pang K.C."/>
            <person name="Pavan W.J."/>
            <person name="Pavesi G."/>
            <person name="Pesole G."/>
            <person name="Petrovsky N."/>
            <person name="Piazza S."/>
            <person name="Reed J."/>
            <person name="Reid J.F."/>
            <person name="Ring B.Z."/>
            <person name="Ringwald M."/>
            <person name="Rost B."/>
            <person name="Ruan Y."/>
            <person name="Salzberg S.L."/>
            <person name="Sandelin A."/>
            <person name="Schneider C."/>
            <person name="Schoenbach C."/>
            <person name="Sekiguchi K."/>
            <person name="Semple C.A."/>
            <person name="Seno S."/>
            <person name="Sessa L."/>
            <person name="Sheng Y."/>
            <person name="Shibata Y."/>
            <person name="Shimada H."/>
            <person name="Shimada K."/>
            <person name="Silva D."/>
            <person name="Sinclair B."/>
            <person name="Sperling S."/>
            <person name="Stupka E."/>
            <person name="Sugiura K."/>
            <person name="Sultana R."/>
            <person name="Takenaka Y."/>
            <person name="Taki K."/>
            <person name="Tammoja K."/>
            <person name="Tan S.L."/>
            <person name="Tang S."/>
            <person name="Taylor M.S."/>
            <person name="Tegner J."/>
            <person name="Teichmann S.A."/>
            <person name="Ueda H.R."/>
            <person name="van Nimwegen E."/>
            <person name="Verardo R."/>
            <person name="Wei C.L."/>
            <person name="Yagi K."/>
            <person name="Yamanishi H."/>
            <person name="Zabarovsky E."/>
            <person name="Zhu S."/>
            <person name="Zimmer A."/>
            <person name="Hide W."/>
            <person name="Bult C."/>
            <person name="Grimmond S.M."/>
            <person name="Teasdale R.D."/>
            <person name="Liu E.T."/>
            <person name="Brusic V."/>
            <person name="Quackenbush J."/>
            <person name="Wahlestedt C."/>
            <person name="Mattick J.S."/>
            <person name="Hume D.A."/>
            <person name="Kai C."/>
            <person name="Sasaki D."/>
            <person name="Tomaru Y."/>
            <person name="Fukuda S."/>
            <person name="Kanamori-Katayama M."/>
            <person name="Suzuki M."/>
            <person name="Aoki J."/>
            <person name="Arakawa T."/>
            <person name="Iida J."/>
            <person name="Imamura K."/>
            <person name="Itoh M."/>
            <person name="Kato T."/>
            <person name="Kawaji H."/>
            <person name="Kawagashira N."/>
            <person name="Kawashima T."/>
            <person name="Kojima M."/>
            <person name="Kondo S."/>
            <person name="Konno H."/>
            <person name="Nakano K."/>
            <person name="Ninomiya N."/>
            <person name="Nishio T."/>
            <person name="Okada M."/>
            <person name="Plessy C."/>
            <person name="Shibata K."/>
            <person name="Shiraki T."/>
            <person name="Suzuki S."/>
            <person name="Tagami M."/>
            <person name="Waki K."/>
            <person name="Watahiki A."/>
            <person name="Okamura-Oho Y."/>
            <person name="Suzuki H."/>
            <person name="Kawai J."/>
            <person name="Hayashizaki Y."/>
        </authorList>
    </citation>
    <scope>NUCLEOTIDE SEQUENCE [LARGE SCALE MRNA]</scope>
    <source>
        <strain>C57BL/6J</strain>
        <tissue>Embryo</tissue>
        <tissue>Kidney</tissue>
    </source>
</reference>
<reference evidence="20" key="3">
    <citation type="journal article" date="2004" name="Genome Res.">
        <title>The status, quality, and expansion of the NIH full-length cDNA project: the Mammalian Gene Collection (MGC).</title>
        <authorList>
            <consortium name="The MGC Project Team"/>
        </authorList>
    </citation>
    <scope>NUCLEOTIDE SEQUENCE [LARGE SCALE MRNA]</scope>
    <source>
        <strain evidence="21">C57BL/6J</strain>
        <tissue evidence="21">Brain</tissue>
        <tissue evidence="20">Retina</tissue>
    </source>
</reference>
<reference key="4">
    <citation type="journal article" date="2005" name="Invest. Ophthalmol. Vis. Sci.">
        <title>Expression and function of glutamine transporters SN1 (SNAT3) and SN2 (SNAT5) in retinal Mueller cells.</title>
        <authorList>
            <person name="Umapathy N.S."/>
            <person name="Li W."/>
            <person name="Mysona B.A."/>
            <person name="Smith S.B."/>
            <person name="Ganapathy V."/>
        </authorList>
    </citation>
    <scope>FUNCTION</scope>
    <scope>TRANSPORTER ACTIVITY</scope>
</reference>
<reference key="5">
    <citation type="journal article" date="2005" name="J. Biol. Chem.">
        <title>Differential regulation of amino acid transporter SNAT3 by insulin in hepatocytes.</title>
        <authorList>
            <person name="Gu S."/>
            <person name="Villegas C.J."/>
            <person name="Jiang J.X."/>
        </authorList>
    </citation>
    <scope>FUNCTION</scope>
    <scope>TRANSPORTER ACTIVITY</scope>
    <scope>SUBCELLULAR LOCATION</scope>
    <scope>INDUCTION</scope>
</reference>
<reference key="6">
    <citation type="journal article" date="2008" name="Invest. Ophthalmol. Vis. Sci.">
        <title>Expression and function of system N glutamine transporters (SN1/SN2 or SNAT3/SNAT5) in retinal ganglion cells.</title>
        <authorList>
            <person name="Umapathy N.S."/>
            <person name="Dun Y."/>
            <person name="Martin P.M."/>
            <person name="Duplantier J.N."/>
            <person name="Roon P."/>
            <person name="Prasad P."/>
            <person name="Smith S.B."/>
            <person name="Ganapathy V."/>
        </authorList>
    </citation>
    <scope>FUNCTION</scope>
    <scope>TRANSPORTER ACTIVITY</scope>
    <scope>BIOPHYSICOCHEMICAL PROPERTIES</scope>
    <scope>TISSUE SPECIFICITY</scope>
</reference>
<reference key="7">
    <citation type="journal article" date="2009" name="Am. J. Physiol.">
        <title>Potassium restriction, high protein intake, and metabolic acidosis increase expression of the glutamine transporter SNAT3 (Slc38a3) in mouse kidney.</title>
        <authorList>
            <person name="Busque S.M."/>
            <person name="Wagner C.A."/>
        </authorList>
    </citation>
    <scope>INDUCTION</scope>
</reference>
<reference key="8">
    <citation type="journal article" date="2010" name="Cell">
        <title>A tissue-specific atlas of mouse protein phosphorylation and expression.</title>
        <authorList>
            <person name="Huttlin E.L."/>
            <person name="Jedrychowski M.P."/>
            <person name="Elias J.E."/>
            <person name="Goswami T."/>
            <person name="Rad R."/>
            <person name="Beausoleil S.A."/>
            <person name="Villen J."/>
            <person name="Haas W."/>
            <person name="Sowa M.E."/>
            <person name="Gygi S.P."/>
        </authorList>
    </citation>
    <scope>IDENTIFICATION BY MASS SPECTROMETRY [LARGE SCALE ANALYSIS]</scope>
    <source>
        <tissue>Brain</tissue>
        <tissue>Liver</tissue>
        <tissue>Pancreas</tissue>
    </source>
</reference>
<reference key="9">
    <citation type="journal article" date="2011" name="J. Cereb. Blood Flow Metab.">
        <title>Differential axial localization along the mouse brain vascular tree of luminal sodium-dependent glutamine transporters Snat1 and Snat3.</title>
        <authorList>
            <person name="Ruderisch N."/>
            <person name="Virgintino D."/>
            <person name="Makrides V."/>
            <person name="Verrey F."/>
        </authorList>
    </citation>
    <scope>SUBCELLULAR LOCATION</scope>
</reference>
<reference key="10">
    <citation type="journal article" date="2014" name="Cell. Physiol. Biochem.">
        <title>Expression of glutamine transporter Slc38a3 (SNAT3) during acidosis is mediated by a different mechanism than tissue-specific expression.</title>
        <authorList>
            <person name="Balkrishna S."/>
            <person name="Broeer A."/>
            <person name="Welford S.M."/>
            <person name="Hatzoglou M."/>
            <person name="Broeer S."/>
        </authorList>
    </citation>
    <scope>INDUCTION</scope>
</reference>
<reference key="11">
    <citation type="journal article" date="2016" name="Pflugers Arch.">
        <title>Loss of function mutation of the Slc38a3 glutamine transporter reveals its critical role for amino acid metabolism in the liver, brain, and kidney.</title>
        <authorList>
            <person name="Chan K."/>
            <person name="Busque S.M."/>
            <person name="Sailer M."/>
            <person name="Stoeger C."/>
            <person name="Broeer S."/>
            <person name="Daniel H."/>
            <person name="Rubio-Aliaga I."/>
            <person name="Wagner C.A."/>
        </authorList>
    </citation>
    <scope>FUNCTION</scope>
    <scope>MUTAGENESIS OF 264-LEU--HIS-505</scope>
</reference>
<reference key="12">
    <citation type="journal article" date="2018" name="Int. J. Mol. Sci.">
        <title>PKC-Mediated Modulation of Astrocyte SNAT3 Glutamine Transporter Function at Synapses in Situ.</title>
        <authorList>
            <person name="Dong W."/>
            <person name="Todd A.C."/>
            <person name="Broeer A."/>
            <person name="Hulme S.R."/>
            <person name="Broeer S."/>
            <person name="Billups B."/>
        </authorList>
    </citation>
    <scope>FUNCTION</scope>
    <scope>TRANSPORTER ACTIVITY</scope>
</reference>
<reference key="13">
    <citation type="journal article" date="2018" name="Neurochem. Int.">
        <title>Protein kinase C-mediated impairment of glutamine outward transport and SN1 transporter distribution by ammonia in mouse cortical astrocytes.</title>
        <authorList>
            <person name="Dabrowska K."/>
            <person name="Albrecht J."/>
            <person name="Zielinska M."/>
        </authorList>
    </citation>
    <scope>FUNCTION</scope>
    <scope>TRANSPORTER ACTIVITY</scope>
    <scope>SUBCELLULAR LOCATION</scope>
</reference>
<reference key="14">
    <citation type="journal article" date="2020" name="Fluids Barriers CNS">
        <title>Choroid plexus LAT2 and SNAT3 as partners in CSF amino acid homeostasis maintenance.</title>
        <authorList>
            <person name="Dolgodilina E."/>
            <person name="Camargo S.M."/>
            <person name="Roth E."/>
            <person name="Herzog B."/>
            <person name="Nunes V."/>
            <person name="Palacin M."/>
            <person name="Verrey F."/>
        </authorList>
    </citation>
    <scope>SUBCELLULAR LOCATION</scope>
</reference>